<protein>
    <recommendedName>
        <fullName evidence="1">Cobyric acid synthase</fullName>
    </recommendedName>
</protein>
<feature type="chain" id="PRO_0000332329" description="Cobyric acid synthase">
    <location>
        <begin position="1"/>
        <end position="493"/>
    </location>
</feature>
<feature type="domain" description="GATase cobBQ-type" evidence="1">
    <location>
        <begin position="246"/>
        <end position="440"/>
    </location>
</feature>
<feature type="active site" description="Nucleophile" evidence="1">
    <location>
        <position position="326"/>
    </location>
</feature>
<feature type="active site" evidence="1">
    <location>
        <position position="432"/>
    </location>
</feature>
<name>COBQ_CLOB1</name>
<comment type="function">
    <text evidence="1">Catalyzes amidations at positions B, D, E, and G on adenosylcobyrinic A,C-diamide. NH(2) groups are provided by glutamine, and one molecule of ATP is hydrogenolyzed for each amidation.</text>
</comment>
<comment type="pathway">
    <text evidence="1">Cofactor biosynthesis; adenosylcobalamin biosynthesis.</text>
</comment>
<comment type="similarity">
    <text evidence="1">Belongs to the CobB/CobQ family. CobQ subfamily.</text>
</comment>
<evidence type="ECO:0000255" key="1">
    <source>
        <dbReference type="HAMAP-Rule" id="MF_00028"/>
    </source>
</evidence>
<gene>
    <name evidence="1" type="primary">cobQ</name>
    <name type="ordered locus">CLB_0954</name>
</gene>
<sequence length="493" mass="55414">MAKIMIQGTASSVGKSLIVAALCRIFKQDGYSVCPFKSQNMSLNSYITLDGKEMGRAQVLQAYAAGLEPEAYMNPILLKPTSDKKSQIIVNGKVYGNSTAMEYHNLKIKFKDMLKEQFEKLEEDFDIVVMEGAGSPAEINLRDRDIVNMGMAELVDAPVLLVGDIDKGGVFASLAGTMLLLNEGEKERVKGTIINKFRGDVEILKPGLDMLEDIIHIPCLGVVPYTRLQLEDEDGAVEFNKKAYAPIDIAVIKMPHISNFTDLDALKSEEDVSIRFVTSKEEFKEPDLLIIPGSKNTIEDLLYLRQCGLEERIKEYSREGKIIGICGGYQVLGSKIKDPYKVETDLGEIDGLNLLDMETTFEKEKVTTRVSAKLLNEETKNTVYGYEIHMGISKYGENIKPLFKIYDKNGEKVDYFDGAINEKGNVMGTYIHGVFDGVVFREKIINELRVKKGLKKKKSQMYEHMREKELDKLADIVRQSLDMEKIYSIIGMK</sequence>
<accession>A7FSG1</accession>
<keyword id="KW-0169">Cobalamin biosynthesis</keyword>
<keyword id="KW-0315">Glutamine amidotransferase</keyword>
<proteinExistence type="inferred from homology"/>
<reference key="1">
    <citation type="journal article" date="2007" name="PLoS ONE">
        <title>Analysis of the neurotoxin complex genes in Clostridium botulinum A1-A4 and B1 strains: BoNT/A3, /Ba4 and /B1 clusters are located within plasmids.</title>
        <authorList>
            <person name="Smith T.J."/>
            <person name="Hill K.K."/>
            <person name="Foley B.T."/>
            <person name="Detter J.C."/>
            <person name="Munk A.C."/>
            <person name="Bruce D.C."/>
            <person name="Doggett N.A."/>
            <person name="Smith L.A."/>
            <person name="Marks J.D."/>
            <person name="Xie G."/>
            <person name="Brettin T.S."/>
        </authorList>
    </citation>
    <scope>NUCLEOTIDE SEQUENCE [LARGE SCALE GENOMIC DNA]</scope>
    <source>
        <strain>ATCC 19397 / Type A</strain>
    </source>
</reference>
<organism>
    <name type="scientific">Clostridium botulinum (strain ATCC 19397 / Type A)</name>
    <dbReference type="NCBI Taxonomy" id="441770"/>
    <lineage>
        <taxon>Bacteria</taxon>
        <taxon>Bacillati</taxon>
        <taxon>Bacillota</taxon>
        <taxon>Clostridia</taxon>
        <taxon>Eubacteriales</taxon>
        <taxon>Clostridiaceae</taxon>
        <taxon>Clostridium</taxon>
    </lineage>
</organism>
<dbReference type="EMBL" id="CP000726">
    <property type="protein sequence ID" value="ABS34263.1"/>
    <property type="molecule type" value="Genomic_DNA"/>
</dbReference>
<dbReference type="RefSeq" id="WP_011948601.1">
    <property type="nucleotide sequence ID" value="NC_009697.1"/>
</dbReference>
<dbReference type="SMR" id="A7FSG1"/>
<dbReference type="KEGG" id="cba:CLB_0954"/>
<dbReference type="HOGENOM" id="CLU_019250_2_2_9"/>
<dbReference type="UniPathway" id="UPA00148"/>
<dbReference type="GO" id="GO:0015420">
    <property type="term" value="F:ABC-type vitamin B12 transporter activity"/>
    <property type="evidence" value="ECO:0007669"/>
    <property type="project" value="UniProtKB-UniRule"/>
</dbReference>
<dbReference type="GO" id="GO:0003824">
    <property type="term" value="F:catalytic activity"/>
    <property type="evidence" value="ECO:0007669"/>
    <property type="project" value="InterPro"/>
</dbReference>
<dbReference type="GO" id="GO:0009236">
    <property type="term" value="P:cobalamin biosynthetic process"/>
    <property type="evidence" value="ECO:0007669"/>
    <property type="project" value="UniProtKB-UniRule"/>
</dbReference>
<dbReference type="CDD" id="cd05389">
    <property type="entry name" value="CobQ_N"/>
    <property type="match status" value="1"/>
</dbReference>
<dbReference type="CDD" id="cd01750">
    <property type="entry name" value="GATase1_CobQ"/>
    <property type="match status" value="1"/>
</dbReference>
<dbReference type="Gene3D" id="3.40.50.880">
    <property type="match status" value="1"/>
</dbReference>
<dbReference type="Gene3D" id="3.40.50.300">
    <property type="entry name" value="P-loop containing nucleotide triphosphate hydrolases"/>
    <property type="match status" value="1"/>
</dbReference>
<dbReference type="HAMAP" id="MF_00028">
    <property type="entry name" value="CobQ"/>
    <property type="match status" value="1"/>
</dbReference>
<dbReference type="InterPro" id="IPR029062">
    <property type="entry name" value="Class_I_gatase-like"/>
</dbReference>
<dbReference type="InterPro" id="IPR002586">
    <property type="entry name" value="CobQ/CobB/MinD/ParA_Nub-bd_dom"/>
</dbReference>
<dbReference type="InterPro" id="IPR033949">
    <property type="entry name" value="CobQ_GATase1"/>
</dbReference>
<dbReference type="InterPro" id="IPR047045">
    <property type="entry name" value="CobQ_N"/>
</dbReference>
<dbReference type="InterPro" id="IPR004459">
    <property type="entry name" value="CobQ_synth"/>
</dbReference>
<dbReference type="InterPro" id="IPR011698">
    <property type="entry name" value="GATase_3"/>
</dbReference>
<dbReference type="InterPro" id="IPR027417">
    <property type="entry name" value="P-loop_NTPase"/>
</dbReference>
<dbReference type="NCBIfam" id="TIGR00313">
    <property type="entry name" value="cobQ"/>
    <property type="match status" value="1"/>
</dbReference>
<dbReference type="NCBIfam" id="NF001989">
    <property type="entry name" value="PRK00784.1"/>
    <property type="match status" value="1"/>
</dbReference>
<dbReference type="PANTHER" id="PTHR21343:SF1">
    <property type="entry name" value="COBYRIC ACID SYNTHASE"/>
    <property type="match status" value="1"/>
</dbReference>
<dbReference type="PANTHER" id="PTHR21343">
    <property type="entry name" value="DETHIOBIOTIN SYNTHETASE"/>
    <property type="match status" value="1"/>
</dbReference>
<dbReference type="Pfam" id="PF01656">
    <property type="entry name" value="CbiA"/>
    <property type="match status" value="1"/>
</dbReference>
<dbReference type="Pfam" id="PF07685">
    <property type="entry name" value="GATase_3"/>
    <property type="match status" value="1"/>
</dbReference>
<dbReference type="SUPFAM" id="SSF52317">
    <property type="entry name" value="Class I glutamine amidotransferase-like"/>
    <property type="match status" value="1"/>
</dbReference>
<dbReference type="SUPFAM" id="SSF52540">
    <property type="entry name" value="P-loop containing nucleoside triphosphate hydrolases"/>
    <property type="match status" value="1"/>
</dbReference>
<dbReference type="PROSITE" id="PS51274">
    <property type="entry name" value="GATASE_COBBQ"/>
    <property type="match status" value="1"/>
</dbReference>